<protein>
    <recommendedName>
        <fullName>PEX5-related protein</fullName>
    </recommendedName>
    <alternativeName>
        <fullName>PEX2-related protein</fullName>
    </alternativeName>
    <alternativeName>
        <fullName>PEX5-like protein</fullName>
    </alternativeName>
    <alternativeName>
        <fullName>Peroxin-5-related protein</fullName>
    </alternativeName>
    <alternativeName>
        <fullName>Peroxisome biogenesis factor 5-like</fullName>
    </alternativeName>
    <alternativeName>
        <fullName>Tetratricopeptide repeat-containing Rab8b-interacting protein</fullName>
        <shortName>Pex5Rp</shortName>
        <shortName>TRIP8b</shortName>
    </alternativeName>
</protein>
<comment type="function">
    <text evidence="2">Accessory subunit of hyperpolarization-activated cyclic nucleotide-gated (HCN) channels, regulating their cell-surface expression and cyclic nucleotide dependence.</text>
</comment>
<comment type="subunit">
    <text evidence="2 3 5">Interacts with RAB8B. Forms an obligate 4:4 complex with HCN2 (By similarity). May interact with the C-terminal PTS1-type tripeptide peroxisomal targeting signal (SKL-type); the relevance of such interaction is however unclear (PubMed:11463335). Interacts with HCN3 (By similarity). Interacts with HCN4 with a 4:4 HCN4:PEX5L stoichiometry; reduces the effects of cAMP on the voltage-dependence and rate of activation of HCN4 (By similarity).</text>
</comment>
<comment type="interaction">
    <interactant intactId="EBI-16150786">
        <id>Q8IYB4-6</id>
    </interactant>
    <interactant intactId="EBI-771231">
        <id>O88703</id>
        <label>Hcn2</label>
    </interactant>
    <organismsDiffer>true</organismsDiffer>
    <experiments>18</experiments>
</comment>
<comment type="subcellular location">
    <subcellularLocation>
        <location evidence="1">Cytoplasm</location>
    </subcellularLocation>
    <subcellularLocation>
        <location evidence="1">Membrane</location>
        <topology evidence="1">Peripheral membrane protein</topology>
    </subcellularLocation>
    <text evidence="1">Some fraction is membrane associated via its interaction with RAB8B.</text>
</comment>
<comment type="alternative products">
    <event type="alternative splicing"/>
    <isoform>
        <id>Q8IYB4-1</id>
        <name>1</name>
        <name>PXR2b</name>
        <sequence type="displayed"/>
    </isoform>
    <isoform>
        <id>Q8IYB4-2</id>
        <name>2</name>
        <name>PXR2a</name>
        <sequence type="described" ref="VSP_010435"/>
    </isoform>
    <isoform>
        <id>Q8IYB4-3</id>
        <name>3</name>
        <sequence type="described" ref="VSP_010436"/>
    </isoform>
    <isoform>
        <id>Q8IYB4-4</id>
        <name>4</name>
        <sequence type="described" ref="VSP_044743"/>
    </isoform>
    <isoform>
        <id>Q8IYB4-5</id>
        <name>5</name>
        <sequence type="described" ref="VSP_045136"/>
    </isoform>
    <isoform>
        <id>Q8IYB4-6</id>
        <name>6</name>
        <sequence type="described" ref="VSP_046977"/>
    </isoform>
    <isoform>
        <id>Q8IYB4-7</id>
        <name>7</name>
        <sequence type="described" ref="VSP_045136 VSP_046978"/>
    </isoform>
    <isoform>
        <id>Q8IYB4-8</id>
        <name>8</name>
        <sequence type="described" ref="VSP_046976"/>
    </isoform>
</comment>
<comment type="tissue specificity">
    <text evidence="5">Mainly expressed in brain. Also expressed in pancreas, testis and pituitary.</text>
</comment>
<comment type="similarity">
    <text evidence="10">Belongs to the peroxisomal targeting signal receptor family.</text>
</comment>
<comment type="sequence caution" evidence="10">
    <conflict type="erroneous initiation">
        <sequence resource="EMBL-CDS" id="CAC01120"/>
    </conflict>
</comment>
<gene>
    <name type="primary">PEX5L</name>
    <name type="synonym">PEX5R</name>
    <name type="synonym">PXR2</name>
</gene>
<reference key="1">
    <citation type="submission" date="1999-09" db="EMBL/GenBank/DDBJ databases">
        <title>A novel peroxisomal targeting signal 1 receptor-like gene, PXR2, preferentially expressed in brain.</title>
        <authorList>
            <person name="Sano H."/>
            <person name="Snider J."/>
            <person name="Ohta M."/>
        </authorList>
    </citation>
    <scope>NUCLEOTIDE SEQUENCE [MRNA] (ISOFORMS 1 AND 2)</scope>
</reference>
<reference key="2">
    <citation type="journal article" date="2004" name="Nat. Genet.">
        <title>Complete sequencing and characterization of 21,243 full-length human cDNAs.</title>
        <authorList>
            <person name="Ota T."/>
            <person name="Suzuki Y."/>
            <person name="Nishikawa T."/>
            <person name="Otsuki T."/>
            <person name="Sugiyama T."/>
            <person name="Irie R."/>
            <person name="Wakamatsu A."/>
            <person name="Hayashi K."/>
            <person name="Sato H."/>
            <person name="Nagai K."/>
            <person name="Kimura K."/>
            <person name="Makita H."/>
            <person name="Sekine M."/>
            <person name="Obayashi M."/>
            <person name="Nishi T."/>
            <person name="Shibahara T."/>
            <person name="Tanaka T."/>
            <person name="Ishii S."/>
            <person name="Yamamoto J."/>
            <person name="Saito K."/>
            <person name="Kawai Y."/>
            <person name="Isono Y."/>
            <person name="Nakamura Y."/>
            <person name="Nagahari K."/>
            <person name="Murakami K."/>
            <person name="Yasuda T."/>
            <person name="Iwayanagi T."/>
            <person name="Wagatsuma M."/>
            <person name="Shiratori A."/>
            <person name="Sudo H."/>
            <person name="Hosoiri T."/>
            <person name="Kaku Y."/>
            <person name="Kodaira H."/>
            <person name="Kondo H."/>
            <person name="Sugawara M."/>
            <person name="Takahashi M."/>
            <person name="Kanda K."/>
            <person name="Yokoi T."/>
            <person name="Furuya T."/>
            <person name="Kikkawa E."/>
            <person name="Omura Y."/>
            <person name="Abe K."/>
            <person name="Kamihara K."/>
            <person name="Katsuta N."/>
            <person name="Sato K."/>
            <person name="Tanikawa M."/>
            <person name="Yamazaki M."/>
            <person name="Ninomiya K."/>
            <person name="Ishibashi T."/>
            <person name="Yamashita H."/>
            <person name="Murakawa K."/>
            <person name="Fujimori K."/>
            <person name="Tanai H."/>
            <person name="Kimata M."/>
            <person name="Watanabe M."/>
            <person name="Hiraoka S."/>
            <person name="Chiba Y."/>
            <person name="Ishida S."/>
            <person name="Ono Y."/>
            <person name="Takiguchi S."/>
            <person name="Watanabe S."/>
            <person name="Yosida M."/>
            <person name="Hotuta T."/>
            <person name="Kusano J."/>
            <person name="Kanehori K."/>
            <person name="Takahashi-Fujii A."/>
            <person name="Hara H."/>
            <person name="Tanase T.-O."/>
            <person name="Nomura Y."/>
            <person name="Togiya S."/>
            <person name="Komai F."/>
            <person name="Hara R."/>
            <person name="Takeuchi K."/>
            <person name="Arita M."/>
            <person name="Imose N."/>
            <person name="Musashino K."/>
            <person name="Yuuki H."/>
            <person name="Oshima A."/>
            <person name="Sasaki N."/>
            <person name="Aotsuka S."/>
            <person name="Yoshikawa Y."/>
            <person name="Matsunawa H."/>
            <person name="Ichihara T."/>
            <person name="Shiohata N."/>
            <person name="Sano S."/>
            <person name="Moriya S."/>
            <person name="Momiyama H."/>
            <person name="Satoh N."/>
            <person name="Takami S."/>
            <person name="Terashima Y."/>
            <person name="Suzuki O."/>
            <person name="Nakagawa S."/>
            <person name="Senoh A."/>
            <person name="Mizoguchi H."/>
            <person name="Goto Y."/>
            <person name="Shimizu F."/>
            <person name="Wakebe H."/>
            <person name="Hishigaki H."/>
            <person name="Watanabe T."/>
            <person name="Sugiyama A."/>
            <person name="Takemoto M."/>
            <person name="Kawakami B."/>
            <person name="Yamazaki M."/>
            <person name="Watanabe K."/>
            <person name="Kumagai A."/>
            <person name="Itakura S."/>
            <person name="Fukuzumi Y."/>
            <person name="Fujimori Y."/>
            <person name="Komiyama M."/>
            <person name="Tashiro H."/>
            <person name="Tanigami A."/>
            <person name="Fujiwara T."/>
            <person name="Ono T."/>
            <person name="Yamada K."/>
            <person name="Fujii Y."/>
            <person name="Ozaki K."/>
            <person name="Hirao M."/>
            <person name="Ohmori Y."/>
            <person name="Kawabata A."/>
            <person name="Hikiji T."/>
            <person name="Kobatake N."/>
            <person name="Inagaki H."/>
            <person name="Ikema Y."/>
            <person name="Okamoto S."/>
            <person name="Okitani R."/>
            <person name="Kawakami T."/>
            <person name="Noguchi S."/>
            <person name="Itoh T."/>
            <person name="Shigeta K."/>
            <person name="Senba T."/>
            <person name="Matsumura K."/>
            <person name="Nakajima Y."/>
            <person name="Mizuno T."/>
            <person name="Morinaga M."/>
            <person name="Sasaki M."/>
            <person name="Togashi T."/>
            <person name="Oyama M."/>
            <person name="Hata H."/>
            <person name="Watanabe M."/>
            <person name="Komatsu T."/>
            <person name="Mizushima-Sugano J."/>
            <person name="Satoh T."/>
            <person name="Shirai Y."/>
            <person name="Takahashi Y."/>
            <person name="Nakagawa K."/>
            <person name="Okumura K."/>
            <person name="Nagase T."/>
            <person name="Nomura N."/>
            <person name="Kikuchi H."/>
            <person name="Masuho Y."/>
            <person name="Yamashita R."/>
            <person name="Nakai K."/>
            <person name="Yada T."/>
            <person name="Nakamura Y."/>
            <person name="Ohara O."/>
            <person name="Isogai T."/>
            <person name="Sugano S."/>
        </authorList>
    </citation>
    <scope>NUCLEOTIDE SEQUENCE [LARGE SCALE MRNA] (ISOFORMS 4; 5; 6; 7 AND 8)</scope>
    <source>
        <tissue>Amygdala</tissue>
        <tissue>Brain</tissue>
        <tissue>Corpus callosum</tissue>
        <tissue>Kidney</tissue>
    </source>
</reference>
<reference key="3">
    <citation type="journal article" date="2006" name="Nature">
        <title>The DNA sequence, annotation and analysis of human chromosome 3.</title>
        <authorList>
            <person name="Muzny D.M."/>
            <person name="Scherer S.E."/>
            <person name="Kaul R."/>
            <person name="Wang J."/>
            <person name="Yu J."/>
            <person name="Sudbrak R."/>
            <person name="Buhay C.J."/>
            <person name="Chen R."/>
            <person name="Cree A."/>
            <person name="Ding Y."/>
            <person name="Dugan-Rocha S."/>
            <person name="Gill R."/>
            <person name="Gunaratne P."/>
            <person name="Harris R.A."/>
            <person name="Hawes A.C."/>
            <person name="Hernandez J."/>
            <person name="Hodgson A.V."/>
            <person name="Hume J."/>
            <person name="Jackson A."/>
            <person name="Khan Z.M."/>
            <person name="Kovar-Smith C."/>
            <person name="Lewis L.R."/>
            <person name="Lozado R.J."/>
            <person name="Metzker M.L."/>
            <person name="Milosavljevic A."/>
            <person name="Miner G.R."/>
            <person name="Morgan M.B."/>
            <person name="Nazareth L.V."/>
            <person name="Scott G."/>
            <person name="Sodergren E."/>
            <person name="Song X.-Z."/>
            <person name="Steffen D."/>
            <person name="Wei S."/>
            <person name="Wheeler D.A."/>
            <person name="Wright M.W."/>
            <person name="Worley K.C."/>
            <person name="Yuan Y."/>
            <person name="Zhang Z."/>
            <person name="Adams C.Q."/>
            <person name="Ansari-Lari M.A."/>
            <person name="Ayele M."/>
            <person name="Brown M.J."/>
            <person name="Chen G."/>
            <person name="Chen Z."/>
            <person name="Clendenning J."/>
            <person name="Clerc-Blankenburg K.P."/>
            <person name="Chen R."/>
            <person name="Chen Z."/>
            <person name="Davis C."/>
            <person name="Delgado O."/>
            <person name="Dinh H.H."/>
            <person name="Dong W."/>
            <person name="Draper H."/>
            <person name="Ernst S."/>
            <person name="Fu G."/>
            <person name="Gonzalez-Garay M.L."/>
            <person name="Garcia D.K."/>
            <person name="Gillett W."/>
            <person name="Gu J."/>
            <person name="Hao B."/>
            <person name="Haugen E."/>
            <person name="Havlak P."/>
            <person name="He X."/>
            <person name="Hennig S."/>
            <person name="Hu S."/>
            <person name="Huang W."/>
            <person name="Jackson L.R."/>
            <person name="Jacob L.S."/>
            <person name="Kelly S.H."/>
            <person name="Kube M."/>
            <person name="Levy R."/>
            <person name="Li Z."/>
            <person name="Liu B."/>
            <person name="Liu J."/>
            <person name="Liu W."/>
            <person name="Lu J."/>
            <person name="Maheshwari M."/>
            <person name="Nguyen B.-V."/>
            <person name="Okwuonu G.O."/>
            <person name="Palmeiri A."/>
            <person name="Pasternak S."/>
            <person name="Perez L.M."/>
            <person name="Phelps K.A."/>
            <person name="Plopper F.J."/>
            <person name="Qiang B."/>
            <person name="Raymond C."/>
            <person name="Rodriguez R."/>
            <person name="Saenphimmachak C."/>
            <person name="Santibanez J."/>
            <person name="Shen H."/>
            <person name="Shen Y."/>
            <person name="Subramanian S."/>
            <person name="Tabor P.E."/>
            <person name="Verduzco D."/>
            <person name="Waldron L."/>
            <person name="Wang J."/>
            <person name="Wang J."/>
            <person name="Wang Q."/>
            <person name="Williams G.A."/>
            <person name="Wong G.K.-S."/>
            <person name="Yao Z."/>
            <person name="Zhang J."/>
            <person name="Zhang X."/>
            <person name="Zhao G."/>
            <person name="Zhou J."/>
            <person name="Zhou Y."/>
            <person name="Nelson D."/>
            <person name="Lehrach H."/>
            <person name="Reinhardt R."/>
            <person name="Naylor S.L."/>
            <person name="Yang H."/>
            <person name="Olson M."/>
            <person name="Weinstock G."/>
            <person name="Gibbs R.A."/>
        </authorList>
    </citation>
    <scope>NUCLEOTIDE SEQUENCE [LARGE SCALE GENOMIC DNA]</scope>
</reference>
<reference key="4">
    <citation type="submission" date="2005-07" db="EMBL/GenBank/DDBJ databases">
        <authorList>
            <person name="Mural R.J."/>
            <person name="Istrail S."/>
            <person name="Sutton G.G."/>
            <person name="Florea L."/>
            <person name="Halpern A.L."/>
            <person name="Mobarry C.M."/>
            <person name="Lippert R."/>
            <person name="Walenz B."/>
            <person name="Shatkay H."/>
            <person name="Dew I."/>
            <person name="Miller J.R."/>
            <person name="Flanigan M.J."/>
            <person name="Edwards N.J."/>
            <person name="Bolanos R."/>
            <person name="Fasulo D."/>
            <person name="Halldorsson B.V."/>
            <person name="Hannenhalli S."/>
            <person name="Turner R."/>
            <person name="Yooseph S."/>
            <person name="Lu F."/>
            <person name="Nusskern D.R."/>
            <person name="Shue B.C."/>
            <person name="Zheng X.H."/>
            <person name="Zhong F."/>
            <person name="Delcher A.L."/>
            <person name="Huson D.H."/>
            <person name="Kravitz S.A."/>
            <person name="Mouchard L."/>
            <person name="Reinert K."/>
            <person name="Remington K.A."/>
            <person name="Clark A.G."/>
            <person name="Waterman M.S."/>
            <person name="Eichler E.E."/>
            <person name="Adams M.D."/>
            <person name="Hunkapiller M.W."/>
            <person name="Myers E.W."/>
            <person name="Venter J.C."/>
        </authorList>
    </citation>
    <scope>NUCLEOTIDE SEQUENCE [LARGE SCALE GENOMIC DNA]</scope>
</reference>
<reference key="5">
    <citation type="journal article" date="2004" name="Genome Res.">
        <title>The status, quality, and expansion of the NIH full-length cDNA project: the Mammalian Gene Collection (MGC).</title>
        <authorList>
            <consortium name="The MGC Project Team"/>
        </authorList>
    </citation>
    <scope>NUCLEOTIDE SEQUENCE [LARGE SCALE MRNA] (ISOFORM 3)</scope>
    <source>
        <tissue>Brain</tissue>
    </source>
</reference>
<reference key="6">
    <citation type="journal article" date="2001" name="Biochem. J.">
        <title>Identification of PEX5p-related novel peroxisome-targeting signal 1 (PTS1)-binding proteins in mammals.</title>
        <authorList>
            <person name="Amery L."/>
            <person name="Sano H."/>
            <person name="Mannaerts G.P."/>
            <person name="Snider J."/>
            <person name="Van Looy J."/>
            <person name="Fransen M."/>
            <person name="Van Veldhoven P.P."/>
        </authorList>
    </citation>
    <scope>NUCLEOTIDE SEQUENCE [MRNA] OF 264-626</scope>
    <scope>SUBCELLULAR LOCATION</scope>
    <scope>TISSUE SPECIFICITY</scope>
    <scope>POSSIBLE INTERACTION WITH PTS1 PROTEINS</scope>
    <source>
        <tissue>Liver</tissue>
    </source>
</reference>
<reference key="7">
    <citation type="journal article" date="2006" name="Science">
        <title>The consensus coding sequences of human breast and colorectal cancers.</title>
        <authorList>
            <person name="Sjoeblom T."/>
            <person name="Jones S."/>
            <person name="Wood L.D."/>
            <person name="Parsons D.W."/>
            <person name="Lin J."/>
            <person name="Barber T.D."/>
            <person name="Mandelker D."/>
            <person name="Leary R.J."/>
            <person name="Ptak J."/>
            <person name="Silliman N."/>
            <person name="Szabo S."/>
            <person name="Buckhaults P."/>
            <person name="Farrell C."/>
            <person name="Meeh P."/>
            <person name="Markowitz S.D."/>
            <person name="Willis J."/>
            <person name="Dawson D."/>
            <person name="Willson J.K.V."/>
            <person name="Gazdar A.F."/>
            <person name="Hartigan J."/>
            <person name="Wu L."/>
            <person name="Liu C."/>
            <person name="Parmigiani G."/>
            <person name="Park B.H."/>
            <person name="Bachman K.E."/>
            <person name="Papadopoulos N."/>
            <person name="Vogelstein B."/>
            <person name="Kinzler K.W."/>
            <person name="Velculescu V.E."/>
        </authorList>
    </citation>
    <scope>VARIANT [LARGE SCALE ANALYSIS] THR-226</scope>
</reference>
<sequence length="626" mass="69697">MYQGHMQKSKEQGYGKLSSDEDLEIIVDQKQGKGSRAADKAVAMVMKEIPREESAEEKPLLTMTSQLVNEQQESRPLLSPSIDDFLCETKSEAIARPVTSNTAVLTTGLDLLDLSEPVSQTQTKAKKSEPSSKTSSLKKKADGSDLISTDAEQRGQPLRVPETSSLDLDIQTQLEKWDDVKFHGDRNTKGHPMAERKSSSSRTGSKELLWSSEHRSQPELSGGKSALNSESASELELVAPTQARLTKEHRWGSALLSRNHSLEEEFERAKAAVESDTEFWDKMQAEWEEMARRNWISENQEAQNQVTISASEKGYYFHTENPFKDWPGAFEEGLKRLKEGDLPVTILFMEAAILQDPGDAEAWQFLGITQAENENEQAAIVALQRCLELQPNNLKALMALAVSYTNTGHQQDACDALKNWIKQNPKYKYLVKSKKGSPGLTRRMSKSPVDSSVLEGVKELYLEAAHQNGDMIDPDLQTGLGVLFHLSGEFNRAIDAFNAALTVRPEDYSLWNRLGATLANGDRSEEAVEAYTRALEIQPGFIRSRYNLGISCINLGAYREAVSNFLTALSLQRKSRNQQQVPHPAISGNIWAALRIALSLMDQPELFQAANLGDLDVLLRAFNLDP</sequence>
<dbReference type="EMBL" id="AB032592">
    <property type="protein sequence ID" value="BAA92878.1"/>
    <property type="molecule type" value="mRNA"/>
</dbReference>
<dbReference type="EMBL" id="AB032593">
    <property type="protein sequence ID" value="BAA92879.1"/>
    <property type="molecule type" value="mRNA"/>
</dbReference>
<dbReference type="EMBL" id="AK294501">
    <property type="protein sequence ID" value="BAH11791.1"/>
    <property type="molecule type" value="mRNA"/>
</dbReference>
<dbReference type="EMBL" id="AK295349">
    <property type="protein sequence ID" value="BAH12041.1"/>
    <property type="molecule type" value="mRNA"/>
</dbReference>
<dbReference type="EMBL" id="AK295386">
    <property type="protein sequence ID" value="BAH12054.1"/>
    <property type="molecule type" value="mRNA"/>
</dbReference>
<dbReference type="EMBL" id="AK299633">
    <property type="protein sequence ID" value="BAH13081.1"/>
    <property type="molecule type" value="mRNA"/>
</dbReference>
<dbReference type="EMBL" id="AK303716">
    <property type="protein sequence ID" value="BAH14028.1"/>
    <property type="molecule type" value="mRNA"/>
</dbReference>
<dbReference type="EMBL" id="AC007687">
    <property type="status" value="NOT_ANNOTATED_CDS"/>
    <property type="molecule type" value="Genomic_DNA"/>
</dbReference>
<dbReference type="EMBL" id="AC090024">
    <property type="status" value="NOT_ANNOTATED_CDS"/>
    <property type="molecule type" value="Genomic_DNA"/>
</dbReference>
<dbReference type="EMBL" id="AC092939">
    <property type="status" value="NOT_ANNOTATED_CDS"/>
    <property type="molecule type" value="Genomic_DNA"/>
</dbReference>
<dbReference type="EMBL" id="CH471052">
    <property type="protein sequence ID" value="EAW78382.1"/>
    <property type="molecule type" value="Genomic_DNA"/>
</dbReference>
<dbReference type="EMBL" id="BC036183">
    <property type="protein sequence ID" value="AAH36183.2"/>
    <property type="molecule type" value="mRNA"/>
</dbReference>
<dbReference type="EMBL" id="AJ245503">
    <property type="protein sequence ID" value="CAC01120.1"/>
    <property type="status" value="ALT_INIT"/>
    <property type="molecule type" value="mRNA"/>
</dbReference>
<dbReference type="CCDS" id="CCDS3236.1">
    <molecule id="Q8IYB4-1"/>
</dbReference>
<dbReference type="CCDS" id="CCDS58861.1">
    <molecule id="Q8IYB4-8"/>
</dbReference>
<dbReference type="CCDS" id="CCDS58862.1">
    <molecule id="Q8IYB4-7"/>
</dbReference>
<dbReference type="CCDS" id="CCDS58863.1">
    <molecule id="Q8IYB4-5"/>
</dbReference>
<dbReference type="CCDS" id="CCDS58864.1">
    <molecule id="Q8IYB4-4"/>
</dbReference>
<dbReference type="CCDS" id="CCDS58865.1">
    <molecule id="Q8IYB4-6"/>
</dbReference>
<dbReference type="CCDS" id="CCDS58866.1">
    <molecule id="Q8IYB4-2"/>
</dbReference>
<dbReference type="CCDS" id="CCDS58867.1">
    <molecule id="Q8IYB4-3"/>
</dbReference>
<dbReference type="RefSeq" id="NP_001243679.1">
    <molecule id="Q8IYB4-2"/>
    <property type="nucleotide sequence ID" value="NM_001256750.2"/>
</dbReference>
<dbReference type="RefSeq" id="NP_001243680.1">
    <molecule id="Q8IYB4-6"/>
    <property type="nucleotide sequence ID" value="NM_001256751.2"/>
</dbReference>
<dbReference type="RefSeq" id="NP_001243681.1">
    <molecule id="Q8IYB4-3"/>
    <property type="nucleotide sequence ID" value="NM_001256752.2"/>
</dbReference>
<dbReference type="RefSeq" id="NP_001243682.1">
    <molecule id="Q8IYB4-4"/>
    <property type="nucleotide sequence ID" value="NM_001256753.2"/>
</dbReference>
<dbReference type="RefSeq" id="NP_001243683.1">
    <molecule id="Q8IYB4-5"/>
    <property type="nucleotide sequence ID" value="NM_001256754.2"/>
</dbReference>
<dbReference type="RefSeq" id="NP_001243684.1">
    <molecule id="Q8IYB4-7"/>
    <property type="nucleotide sequence ID" value="NM_001256755.2"/>
</dbReference>
<dbReference type="RefSeq" id="NP_001243685.1">
    <molecule id="Q8IYB4-8"/>
    <property type="nucleotide sequence ID" value="NM_001256756.2"/>
</dbReference>
<dbReference type="RefSeq" id="NP_001336324.1">
    <molecule id="Q8IYB4-5"/>
    <property type="nucleotide sequence ID" value="NM_001349395.2"/>
</dbReference>
<dbReference type="RefSeq" id="NP_001336328.1">
    <molecule id="Q8IYB4-8"/>
    <property type="nucleotide sequence ID" value="NM_001349399.2"/>
</dbReference>
<dbReference type="RefSeq" id="NP_001336330.1">
    <molecule id="Q8IYB4-8"/>
    <property type="nucleotide sequence ID" value="NM_001349401.2"/>
</dbReference>
<dbReference type="RefSeq" id="NP_001336333.1">
    <molecule id="Q8IYB4-8"/>
    <property type="nucleotide sequence ID" value="NM_001349404.2"/>
</dbReference>
<dbReference type="RefSeq" id="NP_001336335.1">
    <molecule id="Q8IYB4-8"/>
    <property type="nucleotide sequence ID" value="NM_001349406.2"/>
</dbReference>
<dbReference type="RefSeq" id="NP_001336337.1">
    <molecule id="Q8IYB4-8"/>
    <property type="nucleotide sequence ID" value="NM_001349408.2"/>
</dbReference>
<dbReference type="RefSeq" id="NP_001336338.1">
    <molecule id="Q8IYB4-8"/>
    <property type="nucleotide sequence ID" value="NM_001349409.2"/>
</dbReference>
<dbReference type="RefSeq" id="NP_001336339.1">
    <molecule id="Q8IYB4-8"/>
    <property type="nucleotide sequence ID" value="NM_001349410.2"/>
</dbReference>
<dbReference type="RefSeq" id="NP_057643.1">
    <molecule id="Q8IYB4-1"/>
    <property type="nucleotide sequence ID" value="NM_016559.3"/>
</dbReference>
<dbReference type="RefSeq" id="XP_011511189.1">
    <property type="nucleotide sequence ID" value="XM_011512887.2"/>
</dbReference>
<dbReference type="RefSeq" id="XP_011511193.1">
    <molecule id="Q8IYB4-8"/>
    <property type="nucleotide sequence ID" value="XM_011512891.3"/>
</dbReference>
<dbReference type="RefSeq" id="XP_011511194.1">
    <property type="nucleotide sequence ID" value="XM_011512892.2"/>
</dbReference>
<dbReference type="RefSeq" id="XP_016862095.1">
    <property type="nucleotide sequence ID" value="XM_017006606.1"/>
</dbReference>
<dbReference type="RefSeq" id="XP_016862096.1">
    <property type="nucleotide sequence ID" value="XM_017006607.1"/>
</dbReference>
<dbReference type="RefSeq" id="XP_016862097.1">
    <property type="nucleotide sequence ID" value="XM_017006608.1"/>
</dbReference>
<dbReference type="RefSeq" id="XP_016862098.1">
    <property type="nucleotide sequence ID" value="XM_017006609.1"/>
</dbReference>
<dbReference type="RefSeq" id="XP_016862099.1">
    <property type="nucleotide sequence ID" value="XM_017006610.1"/>
</dbReference>
<dbReference type="RefSeq" id="XP_016862100.1">
    <property type="nucleotide sequence ID" value="XM_017006611.1"/>
</dbReference>
<dbReference type="RefSeq" id="XP_054202801.1">
    <molecule id="Q8IYB4-8"/>
    <property type="nucleotide sequence ID" value="XM_054346826.1"/>
</dbReference>
<dbReference type="SMR" id="Q8IYB4"/>
<dbReference type="BioGRID" id="119607">
    <property type="interactions" value="9"/>
</dbReference>
<dbReference type="DIP" id="DIP-58547N"/>
<dbReference type="FunCoup" id="Q8IYB4">
    <property type="interactions" value="169"/>
</dbReference>
<dbReference type="IntAct" id="Q8IYB4">
    <property type="interactions" value="9"/>
</dbReference>
<dbReference type="MINT" id="Q8IYB4"/>
<dbReference type="STRING" id="9606.ENSP00000419975"/>
<dbReference type="BindingDB" id="Q8IYB4"/>
<dbReference type="iPTMnet" id="Q8IYB4"/>
<dbReference type="PhosphoSitePlus" id="Q8IYB4"/>
<dbReference type="BioMuta" id="PEX5L"/>
<dbReference type="DMDM" id="47606040"/>
<dbReference type="MassIVE" id="Q8IYB4"/>
<dbReference type="PaxDb" id="9606-ENSP00000419975"/>
<dbReference type="PeptideAtlas" id="Q8IYB4"/>
<dbReference type="ProteomicsDB" id="18507"/>
<dbReference type="ProteomicsDB" id="18530"/>
<dbReference type="ProteomicsDB" id="19857"/>
<dbReference type="ProteomicsDB" id="20485"/>
<dbReference type="ProteomicsDB" id="6966"/>
<dbReference type="ProteomicsDB" id="71142">
    <molecule id="Q8IYB4-1"/>
</dbReference>
<dbReference type="ProteomicsDB" id="71143">
    <molecule id="Q8IYB4-2"/>
</dbReference>
<dbReference type="ProteomicsDB" id="71144">
    <molecule id="Q8IYB4-3"/>
</dbReference>
<dbReference type="ABCD" id="Q8IYB4">
    <property type="antibodies" value="4 sequenced antibodies"/>
</dbReference>
<dbReference type="Antibodypedia" id="54548">
    <property type="antibodies" value="50 antibodies from 17 providers"/>
</dbReference>
<dbReference type="DNASU" id="51555"/>
<dbReference type="Ensembl" id="ENST00000263962.12">
    <molecule id="Q8IYB4-2"/>
    <property type="protein sequence ID" value="ENSP00000263962.8"/>
    <property type="gene ID" value="ENSG00000114757.19"/>
</dbReference>
<dbReference type="Ensembl" id="ENST00000392649.7">
    <molecule id="Q8IYB4-7"/>
    <property type="protein sequence ID" value="ENSP00000376420.3"/>
    <property type="gene ID" value="ENSG00000114757.19"/>
</dbReference>
<dbReference type="Ensembl" id="ENST00000464614.5">
    <molecule id="Q8IYB4-7"/>
    <property type="protein sequence ID" value="ENSP00000417270.1"/>
    <property type="gene ID" value="ENSG00000114757.19"/>
</dbReference>
<dbReference type="Ensembl" id="ENST00000465751.5">
    <molecule id="Q8IYB4-6"/>
    <property type="protein sequence ID" value="ENSP00000419348.1"/>
    <property type="gene ID" value="ENSG00000114757.19"/>
</dbReference>
<dbReference type="Ensembl" id="ENST00000467460.6">
    <molecule id="Q8IYB4-1"/>
    <property type="protein sequence ID" value="ENSP00000419975.1"/>
    <property type="gene ID" value="ENSG00000114757.19"/>
</dbReference>
<dbReference type="Ensembl" id="ENST00000468741.5">
    <molecule id="Q8IYB4-8"/>
    <property type="protein sequence ID" value="ENSP00000418665.1"/>
    <property type="gene ID" value="ENSG00000114757.19"/>
</dbReference>
<dbReference type="Ensembl" id="ENST00000472994.5">
    <molecule id="Q8IYB4-4"/>
    <property type="protein sequence ID" value="ENSP00000418054.1"/>
    <property type="gene ID" value="ENSG00000114757.19"/>
</dbReference>
<dbReference type="Ensembl" id="ENST00000476138.5">
    <molecule id="Q8IYB4-5"/>
    <property type="protein sequence ID" value="ENSP00000420555.1"/>
    <property type="gene ID" value="ENSG00000114757.19"/>
</dbReference>
<dbReference type="Ensembl" id="ENST00000485199.5">
    <molecule id="Q8IYB4-3"/>
    <property type="protein sequence ID" value="ENSP00000418440.1"/>
    <property type="gene ID" value="ENSG00000114757.19"/>
</dbReference>
<dbReference type="GeneID" id="51555"/>
<dbReference type="KEGG" id="hsa:51555"/>
<dbReference type="MANE-Select" id="ENST00000467460.6">
    <property type="protein sequence ID" value="ENSP00000419975.1"/>
    <property type="RefSeq nucleotide sequence ID" value="NM_016559.3"/>
    <property type="RefSeq protein sequence ID" value="NP_057643.1"/>
</dbReference>
<dbReference type="UCSC" id="uc003fki.3">
    <molecule id="Q8IYB4-1"/>
    <property type="organism name" value="human"/>
</dbReference>
<dbReference type="AGR" id="HGNC:30024"/>
<dbReference type="CTD" id="51555"/>
<dbReference type="DisGeNET" id="51555"/>
<dbReference type="GeneCards" id="PEX5L"/>
<dbReference type="HGNC" id="HGNC:30024">
    <property type="gene designation" value="PEX5L"/>
</dbReference>
<dbReference type="HPA" id="ENSG00000114757">
    <property type="expression patterns" value="Tissue enhanced (brain, parathyroid gland, retina)"/>
</dbReference>
<dbReference type="MIM" id="611058">
    <property type="type" value="gene"/>
</dbReference>
<dbReference type="neXtProt" id="NX_Q8IYB4"/>
<dbReference type="OpenTargets" id="ENSG00000114757"/>
<dbReference type="PharmGKB" id="PA134892044"/>
<dbReference type="VEuPathDB" id="HostDB:ENSG00000114757"/>
<dbReference type="eggNOG" id="KOG1125">
    <property type="taxonomic scope" value="Eukaryota"/>
</dbReference>
<dbReference type="GeneTree" id="ENSGT00940000155931"/>
<dbReference type="HOGENOM" id="CLU_013516_5_0_1"/>
<dbReference type="InParanoid" id="Q8IYB4"/>
<dbReference type="OMA" id="RNWISES"/>
<dbReference type="OrthoDB" id="10006023at2759"/>
<dbReference type="PAN-GO" id="Q8IYB4">
    <property type="GO annotations" value="4 GO annotations based on evolutionary models"/>
</dbReference>
<dbReference type="PhylomeDB" id="Q8IYB4"/>
<dbReference type="TreeFam" id="TF315044"/>
<dbReference type="PathwayCommons" id="Q8IYB4"/>
<dbReference type="SignaLink" id="Q8IYB4"/>
<dbReference type="BioGRID-ORCS" id="51555">
    <property type="hits" value="12 hits in 1139 CRISPR screens"/>
</dbReference>
<dbReference type="ChiTaRS" id="PEX5L">
    <property type="organism name" value="human"/>
</dbReference>
<dbReference type="GenomeRNAi" id="51555"/>
<dbReference type="Pharos" id="Q8IYB4">
    <property type="development level" value="Tbio"/>
</dbReference>
<dbReference type="PRO" id="PR:Q8IYB4"/>
<dbReference type="Proteomes" id="UP000005640">
    <property type="component" value="Chromosome 3"/>
</dbReference>
<dbReference type="RNAct" id="Q8IYB4">
    <property type="molecule type" value="protein"/>
</dbReference>
<dbReference type="Bgee" id="ENSG00000114757">
    <property type="expression patterns" value="Expressed in endothelial cell and 130 other cell types or tissues"/>
</dbReference>
<dbReference type="ExpressionAtlas" id="Q8IYB4">
    <property type="expression patterns" value="baseline and differential"/>
</dbReference>
<dbReference type="GO" id="GO:0005829">
    <property type="term" value="C:cytosol"/>
    <property type="evidence" value="ECO:0000314"/>
    <property type="project" value="UniProtKB"/>
</dbReference>
<dbReference type="GO" id="GO:0005778">
    <property type="term" value="C:peroxisomal membrane"/>
    <property type="evidence" value="ECO:0000318"/>
    <property type="project" value="GO_Central"/>
</dbReference>
<dbReference type="GO" id="GO:0043235">
    <property type="term" value="C:receptor complex"/>
    <property type="evidence" value="ECO:0000314"/>
    <property type="project" value="MGI"/>
</dbReference>
<dbReference type="GO" id="GO:0005052">
    <property type="term" value="F:peroxisome matrix targeting signal-1 binding"/>
    <property type="evidence" value="ECO:0000314"/>
    <property type="project" value="UniProtKB"/>
</dbReference>
<dbReference type="GO" id="GO:0000268">
    <property type="term" value="F:peroxisome targeting sequence binding"/>
    <property type="evidence" value="ECO:0000314"/>
    <property type="project" value="UniProtKB"/>
</dbReference>
<dbReference type="GO" id="GO:0031267">
    <property type="term" value="F:small GTPase binding"/>
    <property type="evidence" value="ECO:0000353"/>
    <property type="project" value="UniProtKB"/>
</dbReference>
<dbReference type="GO" id="GO:0016560">
    <property type="term" value="P:protein import into peroxisome matrix, docking"/>
    <property type="evidence" value="ECO:0000318"/>
    <property type="project" value="GO_Central"/>
</dbReference>
<dbReference type="FunFam" id="1.25.40.10:FF:000012">
    <property type="entry name" value="PEX5-related protein isoform 5"/>
    <property type="match status" value="1"/>
</dbReference>
<dbReference type="Gene3D" id="1.25.40.10">
    <property type="entry name" value="Tetratricopeptide repeat domain"/>
    <property type="match status" value="1"/>
</dbReference>
<dbReference type="InterPro" id="IPR024111">
    <property type="entry name" value="PEX5/PEX5L"/>
</dbReference>
<dbReference type="InterPro" id="IPR011990">
    <property type="entry name" value="TPR-like_helical_dom_sf"/>
</dbReference>
<dbReference type="InterPro" id="IPR019734">
    <property type="entry name" value="TPR_rpt"/>
</dbReference>
<dbReference type="PANTHER" id="PTHR10130">
    <property type="entry name" value="PEROXISOMAL TARGETING SIGNAL 1 RECEPTOR PEX5"/>
    <property type="match status" value="1"/>
</dbReference>
<dbReference type="PANTHER" id="PTHR10130:SF1">
    <property type="entry name" value="PEX5-RELATED PROTEIN"/>
    <property type="match status" value="1"/>
</dbReference>
<dbReference type="Pfam" id="PF13432">
    <property type="entry name" value="TPR_16"/>
    <property type="match status" value="1"/>
</dbReference>
<dbReference type="Pfam" id="PF13181">
    <property type="entry name" value="TPR_8"/>
    <property type="match status" value="2"/>
</dbReference>
<dbReference type="SMART" id="SM00028">
    <property type="entry name" value="TPR"/>
    <property type="match status" value="5"/>
</dbReference>
<dbReference type="SUPFAM" id="SSF48452">
    <property type="entry name" value="TPR-like"/>
    <property type="match status" value="1"/>
</dbReference>
<dbReference type="PROSITE" id="PS50005">
    <property type="entry name" value="TPR"/>
    <property type="match status" value="5"/>
</dbReference>
<dbReference type="PROSITE" id="PS50293">
    <property type="entry name" value="TPR_REGION"/>
    <property type="match status" value="1"/>
</dbReference>
<evidence type="ECO:0000250" key="1"/>
<evidence type="ECO:0000250" key="2">
    <source>
        <dbReference type="UniProtKB" id="Q8C437"/>
    </source>
</evidence>
<evidence type="ECO:0000250" key="3">
    <source>
        <dbReference type="UniProtKB" id="Q925N3"/>
    </source>
</evidence>
<evidence type="ECO:0000256" key="4">
    <source>
        <dbReference type="SAM" id="MobiDB-lite"/>
    </source>
</evidence>
<evidence type="ECO:0000269" key="5">
    <source>
    </source>
</evidence>
<evidence type="ECO:0000269" key="6">
    <source>
    </source>
</evidence>
<evidence type="ECO:0000303" key="7">
    <source>
    </source>
</evidence>
<evidence type="ECO:0000303" key="8">
    <source>
    </source>
</evidence>
<evidence type="ECO:0000303" key="9">
    <source ref="1"/>
</evidence>
<evidence type="ECO:0000305" key="10"/>
<accession>Q8IYB4</accession>
<accession>B7Z2A5</accession>
<accession>B7Z305</accession>
<accession>B7Z318</accession>
<accession>B7Z5Z5</accession>
<accession>B7Z8P2</accession>
<accession>E7EUV8</accession>
<accession>E7EUZ0</accession>
<accession>E9PEC1</accession>
<accession>E9PH97</accession>
<accession>Q9NQD1</accession>
<accession>Q9P2U3</accession>
<accession>Q9P2U4</accession>
<feature type="chain" id="PRO_0000106317" description="PEX5-related protein">
    <location>
        <begin position="1"/>
        <end position="626"/>
    </location>
</feature>
<feature type="repeat" description="TPR 1">
    <location>
        <begin position="326"/>
        <end position="359"/>
    </location>
</feature>
<feature type="repeat" description="TPR 2">
    <location>
        <begin position="360"/>
        <end position="393"/>
    </location>
</feature>
<feature type="repeat" description="TPR 3">
    <location>
        <begin position="395"/>
        <end position="427"/>
    </location>
</feature>
<feature type="repeat" description="TPR 4">
    <location>
        <begin position="474"/>
        <end position="507"/>
    </location>
</feature>
<feature type="repeat" description="TPR 5">
    <location>
        <begin position="509"/>
        <end position="541"/>
    </location>
</feature>
<feature type="repeat" description="TPR 6">
    <location>
        <begin position="543"/>
        <end position="575"/>
    </location>
</feature>
<feature type="region of interest" description="Disordered" evidence="4">
    <location>
        <begin position="1"/>
        <end position="20"/>
    </location>
</feature>
<feature type="region of interest" description="Disordered" evidence="4">
    <location>
        <begin position="118"/>
        <end position="167"/>
    </location>
</feature>
<feature type="region of interest" description="Disordered" evidence="4">
    <location>
        <begin position="181"/>
        <end position="235"/>
    </location>
</feature>
<feature type="compositionally biased region" description="Basic and acidic residues" evidence="4">
    <location>
        <begin position="181"/>
        <end position="198"/>
    </location>
</feature>
<feature type="compositionally biased region" description="Low complexity" evidence="4">
    <location>
        <begin position="225"/>
        <end position="235"/>
    </location>
</feature>
<feature type="modified residue" description="Phosphoserine" evidence="2">
    <location>
        <position position="205"/>
    </location>
</feature>
<feature type="modified residue" description="Phosphoserine" evidence="3">
    <location>
        <position position="253"/>
    </location>
</feature>
<feature type="modified residue" description="Phosphoserine" evidence="3">
    <location>
        <position position="257"/>
    </location>
</feature>
<feature type="modified residue" description="Phosphoserine" evidence="2">
    <location>
        <position position="261"/>
    </location>
</feature>
<feature type="modified residue" description="Phosphoserine" evidence="2">
    <location>
        <position position="445"/>
    </location>
</feature>
<feature type="modified residue" description="Phosphoserine" evidence="2">
    <location>
        <position position="447"/>
    </location>
</feature>
<feature type="splice variant" id="VSP_046976" description="In isoform 8." evidence="7">
    <location>
        <begin position="1"/>
        <end position="192"/>
    </location>
</feature>
<feature type="splice variant" id="VSP_045136" description="In isoform 5 and isoform 7." evidence="7">
    <location>
        <begin position="1"/>
        <end position="43"/>
    </location>
</feature>
<feature type="splice variant" id="VSP_044743" description="In isoform 4." evidence="7">
    <location>
        <begin position="7"/>
        <end position="65"/>
    </location>
</feature>
<feature type="splice variant" id="VSP_046977" description="In isoform 6." evidence="7">
    <location>
        <begin position="7"/>
        <end position="30"/>
    </location>
</feature>
<feature type="splice variant" id="VSP_010435" description="In isoform 2." evidence="9">
    <original>KSKEQGYGKLSSDEDLEIIVDQKQ</original>
    <variation>VVGVTLKKKWHCLQKSDLTLAL</variation>
    <location>
        <begin position="8"/>
        <end position="31"/>
    </location>
</feature>
<feature type="splice variant" id="VSP_010436" description="In isoform 3." evidence="8">
    <location>
        <begin position="32"/>
        <end position="66"/>
    </location>
</feature>
<feature type="splice variant" id="VSP_046978" description="In isoform 7." evidence="7">
    <location>
        <begin position="104"/>
        <end position="168"/>
    </location>
</feature>
<feature type="sequence variant" id="VAR_035865" description="In a colorectal cancer sample; somatic mutation; dbSNP:rs146906651." evidence="6">
    <original>A</original>
    <variation>T</variation>
    <location>
        <position position="226"/>
    </location>
</feature>
<feature type="sequence conflict" description="In Ref. 2; BAH12041." evidence="10" ref="2">
    <original>E</original>
    <variation>K</variation>
    <location>
        <position position="88"/>
    </location>
</feature>
<feature type="sequence conflict" description="In Ref. 5; AAH36183." evidence="10" ref="5">
    <original>S</original>
    <variation>Y</variation>
    <location>
        <position position="216"/>
    </location>
</feature>
<feature type="sequence conflict" description="In Ref. 2; BAH13081." evidence="10" ref="2">
    <original>R</original>
    <variation>Q</variation>
    <location>
        <position position="292"/>
    </location>
</feature>
<feature type="sequence conflict" description="In Ref. 2; BAH11791." evidence="10" ref="2">
    <original>H</original>
    <variation>P</variation>
    <location>
        <position position="318"/>
    </location>
</feature>
<feature type="sequence conflict" description="In Ref. 2; BAH12054." evidence="10" ref="2">
    <original>H</original>
    <variation>Y</variation>
    <location>
        <position position="409"/>
    </location>
</feature>
<feature type="sequence conflict" description="In Ref. 5; AAH36183." evidence="10" ref="5">
    <original>P</original>
    <variation>T</variation>
    <location>
        <position position="474"/>
    </location>
</feature>
<keyword id="KW-0025">Alternative splicing</keyword>
<keyword id="KW-0963">Cytoplasm</keyword>
<keyword id="KW-0472">Membrane</keyword>
<keyword id="KW-0597">Phosphoprotein</keyword>
<keyword id="KW-1267">Proteomics identification</keyword>
<keyword id="KW-1185">Reference proteome</keyword>
<keyword id="KW-0677">Repeat</keyword>
<keyword id="KW-0802">TPR repeat</keyword>
<name>PEX5R_HUMAN</name>
<organism>
    <name type="scientific">Homo sapiens</name>
    <name type="common">Human</name>
    <dbReference type="NCBI Taxonomy" id="9606"/>
    <lineage>
        <taxon>Eukaryota</taxon>
        <taxon>Metazoa</taxon>
        <taxon>Chordata</taxon>
        <taxon>Craniata</taxon>
        <taxon>Vertebrata</taxon>
        <taxon>Euteleostomi</taxon>
        <taxon>Mammalia</taxon>
        <taxon>Eutheria</taxon>
        <taxon>Euarchontoglires</taxon>
        <taxon>Primates</taxon>
        <taxon>Haplorrhini</taxon>
        <taxon>Catarrhini</taxon>
        <taxon>Hominidae</taxon>
        <taxon>Homo</taxon>
    </lineage>
</organism>
<proteinExistence type="evidence at protein level"/>